<evidence type="ECO:0000255" key="1">
    <source>
        <dbReference type="PROSITE-ProRule" id="PRU00550"/>
    </source>
</evidence>
<evidence type="ECO:0000305" key="2"/>
<accession>Q6C5F1</accession>
<reference key="1">
    <citation type="journal article" date="2004" name="Nature">
        <title>Genome evolution in yeasts.</title>
        <authorList>
            <person name="Dujon B."/>
            <person name="Sherman D."/>
            <person name="Fischer G."/>
            <person name="Durrens P."/>
            <person name="Casaregola S."/>
            <person name="Lafontaine I."/>
            <person name="de Montigny J."/>
            <person name="Marck C."/>
            <person name="Neuveglise C."/>
            <person name="Talla E."/>
            <person name="Goffard N."/>
            <person name="Frangeul L."/>
            <person name="Aigle M."/>
            <person name="Anthouard V."/>
            <person name="Babour A."/>
            <person name="Barbe V."/>
            <person name="Barnay S."/>
            <person name="Blanchin S."/>
            <person name="Beckerich J.-M."/>
            <person name="Beyne E."/>
            <person name="Bleykasten C."/>
            <person name="Boisrame A."/>
            <person name="Boyer J."/>
            <person name="Cattolico L."/>
            <person name="Confanioleri F."/>
            <person name="de Daruvar A."/>
            <person name="Despons L."/>
            <person name="Fabre E."/>
            <person name="Fairhead C."/>
            <person name="Ferry-Dumazet H."/>
            <person name="Groppi A."/>
            <person name="Hantraye F."/>
            <person name="Hennequin C."/>
            <person name="Jauniaux N."/>
            <person name="Joyet P."/>
            <person name="Kachouri R."/>
            <person name="Kerrest A."/>
            <person name="Koszul R."/>
            <person name="Lemaire M."/>
            <person name="Lesur I."/>
            <person name="Ma L."/>
            <person name="Muller H."/>
            <person name="Nicaud J.-M."/>
            <person name="Nikolski M."/>
            <person name="Oztas S."/>
            <person name="Ozier-Kalogeropoulos O."/>
            <person name="Pellenz S."/>
            <person name="Potier S."/>
            <person name="Richard G.-F."/>
            <person name="Straub M.-L."/>
            <person name="Suleau A."/>
            <person name="Swennen D."/>
            <person name="Tekaia F."/>
            <person name="Wesolowski-Louvel M."/>
            <person name="Westhof E."/>
            <person name="Wirth B."/>
            <person name="Zeniou-Meyer M."/>
            <person name="Zivanovic Y."/>
            <person name="Bolotin-Fukuhara M."/>
            <person name="Thierry A."/>
            <person name="Bouchier C."/>
            <person name="Caudron B."/>
            <person name="Scarpelli C."/>
            <person name="Gaillardin C."/>
            <person name="Weissenbach J."/>
            <person name="Wincker P."/>
            <person name="Souciet J.-L."/>
        </authorList>
    </citation>
    <scope>NUCLEOTIDE SEQUENCE [LARGE SCALE GENOMIC DNA]</scope>
    <source>
        <strain>CLIB 122 / E 150</strain>
    </source>
</reference>
<organism>
    <name type="scientific">Yarrowia lipolytica (strain CLIB 122 / E 150)</name>
    <name type="common">Yeast</name>
    <name type="synonym">Candida lipolytica</name>
    <dbReference type="NCBI Taxonomy" id="284591"/>
    <lineage>
        <taxon>Eukaryota</taxon>
        <taxon>Fungi</taxon>
        <taxon>Dikarya</taxon>
        <taxon>Ascomycota</taxon>
        <taxon>Saccharomycotina</taxon>
        <taxon>Dipodascomycetes</taxon>
        <taxon>Dipodascales</taxon>
        <taxon>Dipodascales incertae sedis</taxon>
        <taxon>Yarrowia</taxon>
    </lineage>
</organism>
<dbReference type="EMBL" id="CR382131">
    <property type="protein sequence ID" value="CAG79706.1"/>
    <property type="molecule type" value="Genomic_DNA"/>
</dbReference>
<dbReference type="RefSeq" id="XP_504111.1">
    <property type="nucleotide sequence ID" value="XM_504111.1"/>
</dbReference>
<dbReference type="SMR" id="Q6C5F1"/>
<dbReference type="STRING" id="284591.Q6C5F1"/>
<dbReference type="EnsemblFungi" id="CAG79706">
    <property type="protein sequence ID" value="CAG79706"/>
    <property type="gene ID" value="YALI0_E18612g"/>
</dbReference>
<dbReference type="KEGG" id="yli:2911724"/>
<dbReference type="VEuPathDB" id="FungiDB:YALI0_E18612g"/>
<dbReference type="HOGENOM" id="CLU_002294_0_0_1"/>
<dbReference type="InParanoid" id="Q6C5F1"/>
<dbReference type="OMA" id="HFPMIAR"/>
<dbReference type="OrthoDB" id="125399at4891"/>
<dbReference type="Proteomes" id="UP000001300">
    <property type="component" value="Chromosome E"/>
</dbReference>
<dbReference type="GO" id="GO:0005769">
    <property type="term" value="C:early endosome"/>
    <property type="evidence" value="ECO:0000318"/>
    <property type="project" value="GO_Central"/>
</dbReference>
<dbReference type="GO" id="GO:0005770">
    <property type="term" value="C:late endosome"/>
    <property type="evidence" value="ECO:0000318"/>
    <property type="project" value="GO_Central"/>
</dbReference>
<dbReference type="GO" id="GO:0005886">
    <property type="term" value="C:plasma membrane"/>
    <property type="evidence" value="ECO:0000318"/>
    <property type="project" value="GO_Central"/>
</dbReference>
<dbReference type="GO" id="GO:0030133">
    <property type="term" value="C:transport vesicle"/>
    <property type="evidence" value="ECO:0000318"/>
    <property type="project" value="GO_Central"/>
</dbReference>
<dbReference type="GO" id="GO:0097422">
    <property type="term" value="C:tubular endosome"/>
    <property type="evidence" value="ECO:0000318"/>
    <property type="project" value="GO_Central"/>
</dbReference>
<dbReference type="GO" id="GO:0005085">
    <property type="term" value="F:guanyl-nucleotide exchange factor activity"/>
    <property type="evidence" value="ECO:0000318"/>
    <property type="project" value="GO_Central"/>
</dbReference>
<dbReference type="GO" id="GO:0035091">
    <property type="term" value="F:phosphatidylinositol binding"/>
    <property type="evidence" value="ECO:0007669"/>
    <property type="project" value="InterPro"/>
</dbReference>
<dbReference type="GO" id="GO:0000149">
    <property type="term" value="F:SNARE binding"/>
    <property type="evidence" value="ECO:0000318"/>
    <property type="project" value="GO_Central"/>
</dbReference>
<dbReference type="GO" id="GO:0045022">
    <property type="term" value="P:early endosome to late endosome transport"/>
    <property type="evidence" value="ECO:0000318"/>
    <property type="project" value="GO_Central"/>
</dbReference>
<dbReference type="CDD" id="cd06093">
    <property type="entry name" value="PX_domain"/>
    <property type="match status" value="1"/>
</dbReference>
<dbReference type="Gene3D" id="1.25.40.20">
    <property type="entry name" value="Ankyrin repeat-containing domain"/>
    <property type="match status" value="2"/>
</dbReference>
<dbReference type="Gene3D" id="3.30.1520.10">
    <property type="entry name" value="Phox-like domain"/>
    <property type="match status" value="1"/>
</dbReference>
<dbReference type="Gene3D" id="1.20.1050.80">
    <property type="entry name" value="VPS9 domain"/>
    <property type="match status" value="1"/>
</dbReference>
<dbReference type="InterPro" id="IPR002110">
    <property type="entry name" value="Ankyrin_rpt"/>
</dbReference>
<dbReference type="InterPro" id="IPR036770">
    <property type="entry name" value="Ankyrin_rpt-contain_sf"/>
</dbReference>
<dbReference type="InterPro" id="IPR001683">
    <property type="entry name" value="PX_dom"/>
</dbReference>
<dbReference type="InterPro" id="IPR036871">
    <property type="entry name" value="PX_dom_sf"/>
</dbReference>
<dbReference type="InterPro" id="IPR051248">
    <property type="entry name" value="UPF0507/Ank_repeat_27"/>
</dbReference>
<dbReference type="InterPro" id="IPR003123">
    <property type="entry name" value="VPS9"/>
</dbReference>
<dbReference type="InterPro" id="IPR037191">
    <property type="entry name" value="VPS9_dom_sf"/>
</dbReference>
<dbReference type="PANTHER" id="PTHR24170">
    <property type="entry name" value="ANKYRIN REPEAT DOMAIN-CONTAINING PROTEIN 27"/>
    <property type="match status" value="1"/>
</dbReference>
<dbReference type="PANTHER" id="PTHR24170:SF1">
    <property type="entry name" value="DOMAIN PROTEIN, PUTATIVE (AFU_ORTHOLOGUE AFUA_1G09870)-RELATED"/>
    <property type="match status" value="1"/>
</dbReference>
<dbReference type="Pfam" id="PF00787">
    <property type="entry name" value="PX"/>
    <property type="match status" value="1"/>
</dbReference>
<dbReference type="Pfam" id="PF02204">
    <property type="entry name" value="VPS9"/>
    <property type="match status" value="1"/>
</dbReference>
<dbReference type="SMART" id="SM00248">
    <property type="entry name" value="ANK"/>
    <property type="match status" value="4"/>
</dbReference>
<dbReference type="SUPFAM" id="SSF48403">
    <property type="entry name" value="Ankyrin repeat"/>
    <property type="match status" value="1"/>
</dbReference>
<dbReference type="SUPFAM" id="SSF64268">
    <property type="entry name" value="PX domain"/>
    <property type="match status" value="1"/>
</dbReference>
<dbReference type="SUPFAM" id="SSF109993">
    <property type="entry name" value="VPS9 domain"/>
    <property type="match status" value="1"/>
</dbReference>
<dbReference type="PROSITE" id="PS51205">
    <property type="entry name" value="VPS9"/>
    <property type="match status" value="1"/>
</dbReference>
<protein>
    <recommendedName>
        <fullName>UPF0507 protein YALI0E18612g</fullName>
    </recommendedName>
</protein>
<feature type="chain" id="PRO_0000311657" description="UPF0507 protein YALI0E18612g">
    <location>
        <begin position="1"/>
        <end position="1058"/>
    </location>
</feature>
<feature type="domain" description="VPS9" evidence="1">
    <location>
        <begin position="252"/>
        <end position="394"/>
    </location>
</feature>
<comment type="similarity">
    <text evidence="2">Belongs to the UPF0507 family.</text>
</comment>
<proteinExistence type="inferred from homology"/>
<gene>
    <name type="ordered locus">YALI0E18612g</name>
</gene>
<keyword id="KW-1185">Reference proteome</keyword>
<sequence>MSAMNPLLSFLFNHPNPSQKFRDQVAQLAHSNYAILVPQISLDDHCDAELTPEAVFSHVIRISHTGENQRARYFASANGRTVIFKNDQVMTYRGYKNNVTVNIVDQYVYTPVCWYLPRTCFQNFLVYEISGYLTEKPLPEAPKEIDQNQYDGPSFEDILLIYPNVGRQLSRLLATTFDNYTSTAANTEELDLEFERATDRAIEYVQAIDPLMVRRIIEEQRLTETQLEKKIDEYVESQLSRKLWNALIALRTNEDGPLDQAVESIKYLSLNQVDLPENEKHWEAKVVAAANVLQTLANTSTNESLPCNCRFLENTLMKCIDTLTDDSIQVNADVLVSLLLVVVARANISHLNSTIYYIRSFSSNAVDSGKLGYMLSTLEAVMYHIGENREQLEAISEANRWFFERVEKGDLTEFDFERPSMKSGLQRDDADWKTVFAATNPAGESALMCAVSSNQQSSLTCLLDHFGYTQEDILADRSVQGSTLLVSALRTENEDIIKLVLDRVRDCADLAHYLSVGDEYGRSVGHYFFHSLYLQQQVGSLINWTARDNQGQTPLSSLCRSYDNPDYHALFKNALKTCLDATGMVDLRVHTDAKGNTLLHTVSDEKVLSTLLNHPDVLVNVNQPNKRGMTALMAHAKYARLKAIEVLCKDPRIDFAPTDNKGMNVFDIARDRRTADFLDECYMSLQPNLGETDKYCEILRSVIADGELCFVIKTRQDGKLSAVRRPYSDFVFLQKWLAHEQPLSWFPALMTPTNPFAIPHRPSREILHAMHLRLNLFLRTLLLHPTFSNHELLWEWLLVQDISHTHLAERTTKKLENKKEKDLEEYIILGEPEMDEIEGFVSHALQQVDLMRKATMNLHQASVKLCNAHRDYCKSWMLMKETVDELKEIPGTSPRENIIANLSSAMVTLGDTFRINNSSPFVFSCYIESLQNMADATTLALAHPLAQISHLRLQQMLLVKLQADAVALSEKKTFRDFFHDREKEIRLIKNRIHITENEIRRLSMETKNAQITLASELGGFYQVHEHELTLSIKNIVSRNIKRHKELQGDLEEIQRRFI</sequence>
<name>U507_YARLI</name>